<accession>O70194</accession>
<accession>Q8BLH0</accession>
<accession>Q8BWW1</accession>
<name>EIF3D_MOUSE</name>
<proteinExistence type="evidence at protein level"/>
<sequence length="548" mass="63989">MAKFMTPVIQDNPSGWGPCAVPEQFRDMPYQPFSKGDRLGKVADWTGATYQDKRYTNKYSSQFGGGSQYAYFHEEDETSFQLVDTARTQKTAYQRNRMRFAQRNLRRDKDRRNMVQFNLQTLPKSAKQKERERIRLQKKFQKQFGVRQKWDQKSQKPRDSSVEVRSDWEVKEEMDFPQLMKMRYLEVSEPQDIECCGALEYYDKAFDRITTRSEKPLRSIKRIFHTVTTTDDPVIRKLAKTQGNVFATDAILATLMSCTRSVYSWDIVVQRVGSKLFFDKRDNSDFDLLTVSETANEPPQDEGNSFNSPRNLAMEATYINHNFSQQCLRMGRERYNFPNPNPFVEDDMDKNEIASVAYRYRRWKLGDDIDLIVRCEHDGVMTGANGEVSFINIKTLNEWDSRHCNGVDWRQKLDSQRGAVIATELKNNSYKLARWTCCALLAGSEYLKLGYVSRYHVKDSSRHVILGTQQFKPNEFASQINLSVENAWGILRCVIDICMKLEEGKYLILKDPNKQVIRVYSLPDGTFSSEEDEEDEEEEEEEEEEEET</sequence>
<protein>
    <recommendedName>
        <fullName evidence="3">Eukaryotic translation initiation factor 3 subunit D</fullName>
        <shortName evidence="3">eIF3d</shortName>
    </recommendedName>
    <alternativeName>
        <fullName evidence="3">Eukaryotic translation initiation factor 3 subunit 7</fullName>
    </alternativeName>
    <alternativeName>
        <fullName evidence="3">eIF-3-zeta</fullName>
    </alternativeName>
    <alternativeName>
        <fullName>eIF3 p66</fullName>
    </alternativeName>
</protein>
<feature type="chain" id="PRO_0000123521" description="Eukaryotic translation initiation factor 3 subunit D">
    <location>
        <begin position="1"/>
        <end position="548"/>
    </location>
</feature>
<feature type="region of interest" description="RNA gate" evidence="1">
    <location>
        <begin position="285"/>
        <end position="299"/>
    </location>
</feature>
<feature type="region of interest" description="Disordered" evidence="4">
    <location>
        <begin position="523"/>
        <end position="548"/>
    </location>
</feature>
<feature type="compositionally biased region" description="Acidic residues" evidence="4">
    <location>
        <begin position="529"/>
        <end position="548"/>
    </location>
</feature>
<feature type="modified residue" description="N6-acetyllysine" evidence="9">
    <location>
        <position position="53"/>
    </location>
</feature>
<feature type="modified residue" description="Phosphoserine" evidence="2">
    <location>
        <position position="161"/>
    </location>
</feature>
<feature type="modified residue" description="Phosphoserine" evidence="7 8">
    <location>
        <position position="528"/>
    </location>
</feature>
<feature type="modified residue" description="Phosphoserine" evidence="7">
    <location>
        <position position="529"/>
    </location>
</feature>
<feature type="sequence conflict" description="In Ref. 1; BAA25327." evidence="6" ref="1">
    <original>ALEYYDKAFDRITTRSEKPLRS</original>
    <variation>PWSTTTKPLTASPQGVRSPCD</variation>
    <location>
        <begin position="198"/>
        <end position="219"/>
    </location>
</feature>
<feature type="sequence conflict" description="In Ref. 2; BAC32270." evidence="6" ref="2">
    <original>R</original>
    <variation>G</variation>
    <location>
        <position position="281"/>
    </location>
</feature>
<organism>
    <name type="scientific">Mus musculus</name>
    <name type="common">Mouse</name>
    <dbReference type="NCBI Taxonomy" id="10090"/>
    <lineage>
        <taxon>Eukaryota</taxon>
        <taxon>Metazoa</taxon>
        <taxon>Chordata</taxon>
        <taxon>Craniata</taxon>
        <taxon>Vertebrata</taxon>
        <taxon>Euteleostomi</taxon>
        <taxon>Mammalia</taxon>
        <taxon>Eutheria</taxon>
        <taxon>Euarchontoglires</taxon>
        <taxon>Glires</taxon>
        <taxon>Rodentia</taxon>
        <taxon>Myomorpha</taxon>
        <taxon>Muroidea</taxon>
        <taxon>Muridae</taxon>
        <taxon>Murinae</taxon>
        <taxon>Mus</taxon>
        <taxon>Mus</taxon>
    </lineage>
</organism>
<keyword id="KW-0007">Acetylation</keyword>
<keyword id="KW-0963">Cytoplasm</keyword>
<keyword id="KW-0396">Initiation factor</keyword>
<keyword id="KW-0597">Phosphoprotein</keyword>
<keyword id="KW-0648">Protein biosynthesis</keyword>
<keyword id="KW-1185">Reference proteome</keyword>
<keyword id="KW-0694">RNA-binding</keyword>
<gene>
    <name type="primary">Eif3d</name>
    <name type="synonym">Eif3s7</name>
</gene>
<evidence type="ECO:0000250" key="1">
    <source>
        <dbReference type="UniProtKB" id="K7IM66"/>
    </source>
</evidence>
<evidence type="ECO:0000250" key="2">
    <source>
        <dbReference type="UniProtKB" id="O15371"/>
    </source>
</evidence>
<evidence type="ECO:0000255" key="3">
    <source>
        <dbReference type="HAMAP-Rule" id="MF_03003"/>
    </source>
</evidence>
<evidence type="ECO:0000256" key="4">
    <source>
        <dbReference type="SAM" id="MobiDB-lite"/>
    </source>
</evidence>
<evidence type="ECO:0000269" key="5">
    <source>
    </source>
</evidence>
<evidence type="ECO:0000305" key="6"/>
<evidence type="ECO:0007744" key="7">
    <source>
    </source>
</evidence>
<evidence type="ECO:0007744" key="8">
    <source>
    </source>
</evidence>
<evidence type="ECO:0007744" key="9">
    <source>
    </source>
</evidence>
<dbReference type="EMBL" id="AB012580">
    <property type="protein sequence ID" value="BAA25327.1"/>
    <property type="molecule type" value="mRNA"/>
</dbReference>
<dbReference type="EMBL" id="AK045228">
    <property type="protein sequence ID" value="BAC32270.1"/>
    <property type="molecule type" value="mRNA"/>
</dbReference>
<dbReference type="EMBL" id="AK049767">
    <property type="protein sequence ID" value="BAC33910.1"/>
    <property type="molecule type" value="mRNA"/>
</dbReference>
<dbReference type="EMBL" id="AK145689">
    <property type="protein sequence ID" value="BAE26591.1"/>
    <property type="molecule type" value="mRNA"/>
</dbReference>
<dbReference type="EMBL" id="AK168256">
    <property type="protein sequence ID" value="BAE40204.1"/>
    <property type="molecule type" value="mRNA"/>
</dbReference>
<dbReference type="EMBL" id="BC089020">
    <property type="protein sequence ID" value="AAH89020.1"/>
    <property type="molecule type" value="mRNA"/>
</dbReference>
<dbReference type="CCDS" id="CCDS37130.1"/>
<dbReference type="RefSeq" id="NP_001398855.1">
    <property type="nucleotide sequence ID" value="NM_001411926.1"/>
</dbReference>
<dbReference type="RefSeq" id="NP_061219.2">
    <property type="nucleotide sequence ID" value="NM_018749.3"/>
</dbReference>
<dbReference type="RefSeq" id="XP_006521255.1">
    <property type="nucleotide sequence ID" value="XM_006521192.1"/>
</dbReference>
<dbReference type="SMR" id="O70194"/>
<dbReference type="BioGRID" id="207740">
    <property type="interactions" value="29"/>
</dbReference>
<dbReference type="FunCoup" id="O70194">
    <property type="interactions" value="3433"/>
</dbReference>
<dbReference type="IntAct" id="O70194">
    <property type="interactions" value="7"/>
</dbReference>
<dbReference type="MINT" id="O70194"/>
<dbReference type="STRING" id="10090.ENSMUSP00000098053"/>
<dbReference type="GlyGen" id="O70194">
    <property type="glycosylation" value="1 site, 1 O-linked glycan (1 site)"/>
</dbReference>
<dbReference type="iPTMnet" id="O70194"/>
<dbReference type="PhosphoSitePlus" id="O70194"/>
<dbReference type="SwissPalm" id="O70194"/>
<dbReference type="jPOST" id="O70194"/>
<dbReference type="PaxDb" id="10090-ENSMUSP00000098053"/>
<dbReference type="PeptideAtlas" id="O70194"/>
<dbReference type="ProteomicsDB" id="275653"/>
<dbReference type="Pumba" id="O70194"/>
<dbReference type="Antibodypedia" id="25691">
    <property type="antibodies" value="265 antibodies from 32 providers"/>
</dbReference>
<dbReference type="DNASU" id="55944"/>
<dbReference type="Ensembl" id="ENSMUST00000100484.6">
    <property type="protein sequence ID" value="ENSMUSP00000098053.5"/>
    <property type="gene ID" value="ENSMUSG00000016554.10"/>
</dbReference>
<dbReference type="GeneID" id="55944"/>
<dbReference type="KEGG" id="mmu:55944"/>
<dbReference type="UCSC" id="uc007wom.1">
    <property type="organism name" value="mouse"/>
</dbReference>
<dbReference type="AGR" id="MGI:1933181"/>
<dbReference type="CTD" id="8664"/>
<dbReference type="MGI" id="MGI:1933181">
    <property type="gene designation" value="Eif3d"/>
</dbReference>
<dbReference type="VEuPathDB" id="HostDB:ENSMUSG00000016554"/>
<dbReference type="eggNOG" id="KOG2479">
    <property type="taxonomic scope" value="Eukaryota"/>
</dbReference>
<dbReference type="GeneTree" id="ENSGT00390000002667"/>
<dbReference type="HOGENOM" id="CLU_024521_2_0_1"/>
<dbReference type="InParanoid" id="O70194"/>
<dbReference type="OMA" id="FMDKRDN"/>
<dbReference type="OrthoDB" id="16538at2759"/>
<dbReference type="PhylomeDB" id="O70194"/>
<dbReference type="TreeFam" id="TF101519"/>
<dbReference type="Reactome" id="R-MMU-156827">
    <property type="pathway name" value="L13a-mediated translational silencing of Ceruloplasmin expression"/>
</dbReference>
<dbReference type="Reactome" id="R-MMU-72649">
    <property type="pathway name" value="Translation initiation complex formation"/>
</dbReference>
<dbReference type="Reactome" id="R-MMU-72689">
    <property type="pathway name" value="Formation of a pool of free 40S subunits"/>
</dbReference>
<dbReference type="Reactome" id="R-MMU-72695">
    <property type="pathway name" value="Formation of the ternary complex, and subsequently, the 43S complex"/>
</dbReference>
<dbReference type="Reactome" id="R-MMU-72702">
    <property type="pathway name" value="Ribosomal scanning and start codon recognition"/>
</dbReference>
<dbReference type="Reactome" id="R-MMU-72706">
    <property type="pathway name" value="GTP hydrolysis and joining of the 60S ribosomal subunit"/>
</dbReference>
<dbReference type="BioGRID-ORCS" id="55944">
    <property type="hits" value="27 hits in 78 CRISPR screens"/>
</dbReference>
<dbReference type="ChiTaRS" id="Eif3d">
    <property type="organism name" value="mouse"/>
</dbReference>
<dbReference type="PRO" id="PR:O70194"/>
<dbReference type="Proteomes" id="UP000000589">
    <property type="component" value="Chromosome 15"/>
</dbReference>
<dbReference type="RNAct" id="O70194">
    <property type="molecule type" value="protein"/>
</dbReference>
<dbReference type="Bgee" id="ENSMUSG00000016554">
    <property type="expression patterns" value="Expressed in floor plate of midbrain and 263 other cell types or tissues"/>
</dbReference>
<dbReference type="ExpressionAtlas" id="O70194">
    <property type="expression patterns" value="baseline and differential"/>
</dbReference>
<dbReference type="GO" id="GO:0016282">
    <property type="term" value="C:eukaryotic 43S preinitiation complex"/>
    <property type="evidence" value="ECO:0007669"/>
    <property type="project" value="UniProtKB-UniRule"/>
</dbReference>
<dbReference type="GO" id="GO:0033290">
    <property type="term" value="C:eukaryotic 48S preinitiation complex"/>
    <property type="evidence" value="ECO:0007669"/>
    <property type="project" value="UniProtKB-UniRule"/>
</dbReference>
<dbReference type="GO" id="GO:0005852">
    <property type="term" value="C:eukaryotic translation initiation factor 3 complex"/>
    <property type="evidence" value="ECO:0000314"/>
    <property type="project" value="UniProtKB"/>
</dbReference>
<dbReference type="GO" id="GO:0071541">
    <property type="term" value="C:eukaryotic translation initiation factor 3 complex, eIF3m"/>
    <property type="evidence" value="ECO:0000314"/>
    <property type="project" value="MGI"/>
</dbReference>
<dbReference type="GO" id="GO:0045202">
    <property type="term" value="C:synapse"/>
    <property type="evidence" value="ECO:0000314"/>
    <property type="project" value="SynGO"/>
</dbReference>
<dbReference type="GO" id="GO:0098808">
    <property type="term" value="F:mRNA cap binding"/>
    <property type="evidence" value="ECO:0000250"/>
    <property type="project" value="UniProtKB"/>
</dbReference>
<dbReference type="GO" id="GO:0003743">
    <property type="term" value="F:translation initiation factor activity"/>
    <property type="evidence" value="ECO:0007669"/>
    <property type="project" value="UniProtKB-UniRule"/>
</dbReference>
<dbReference type="GO" id="GO:0002191">
    <property type="term" value="P:cap-dependent translational initiation"/>
    <property type="evidence" value="ECO:0000250"/>
    <property type="project" value="UniProtKB"/>
</dbReference>
<dbReference type="GO" id="GO:0001732">
    <property type="term" value="P:formation of cytoplasmic translation initiation complex"/>
    <property type="evidence" value="ECO:0000314"/>
    <property type="project" value="UniProtKB"/>
</dbReference>
<dbReference type="GO" id="GO:0075522">
    <property type="term" value="P:IRES-dependent viral translational initiation"/>
    <property type="evidence" value="ECO:0007669"/>
    <property type="project" value="Ensembl"/>
</dbReference>
<dbReference type="GO" id="GO:0075525">
    <property type="term" value="P:viral translational termination-reinitiation"/>
    <property type="evidence" value="ECO:0007669"/>
    <property type="project" value="Ensembl"/>
</dbReference>
<dbReference type="HAMAP" id="MF_03003">
    <property type="entry name" value="eIF3d"/>
    <property type="match status" value="1"/>
</dbReference>
<dbReference type="InterPro" id="IPR007783">
    <property type="entry name" value="eIF3d"/>
</dbReference>
<dbReference type="PANTHER" id="PTHR12399">
    <property type="entry name" value="EUKARYOTIC TRANSLATION INITIATION FACTOR 3 SUBUNIT 7"/>
    <property type="match status" value="1"/>
</dbReference>
<dbReference type="PANTHER" id="PTHR12399:SF0">
    <property type="entry name" value="EUKARYOTIC TRANSLATION INITIATION FACTOR 3 SUBUNIT D"/>
    <property type="match status" value="1"/>
</dbReference>
<dbReference type="Pfam" id="PF05091">
    <property type="entry name" value="eIF-3_zeta"/>
    <property type="match status" value="1"/>
</dbReference>
<dbReference type="PIRSF" id="PIRSF016281">
    <property type="entry name" value="EIF-3_zeta"/>
    <property type="match status" value="1"/>
</dbReference>
<reference key="1">
    <citation type="submission" date="1998-03" db="EMBL/GenBank/DDBJ databases">
        <title>Molecular cloning of mouse translation initiation factor eIF3 p66 subunit.</title>
        <authorList>
            <person name="Muramatsu H."/>
        </authorList>
    </citation>
    <scope>NUCLEOTIDE SEQUENCE [MRNA]</scope>
    <source>
        <tissue>Embryo</tissue>
    </source>
</reference>
<reference key="2">
    <citation type="journal article" date="2005" name="Science">
        <title>The transcriptional landscape of the mammalian genome.</title>
        <authorList>
            <person name="Carninci P."/>
            <person name="Kasukawa T."/>
            <person name="Katayama S."/>
            <person name="Gough J."/>
            <person name="Frith M.C."/>
            <person name="Maeda N."/>
            <person name="Oyama R."/>
            <person name="Ravasi T."/>
            <person name="Lenhard B."/>
            <person name="Wells C."/>
            <person name="Kodzius R."/>
            <person name="Shimokawa K."/>
            <person name="Bajic V.B."/>
            <person name="Brenner S.E."/>
            <person name="Batalov S."/>
            <person name="Forrest A.R."/>
            <person name="Zavolan M."/>
            <person name="Davis M.J."/>
            <person name="Wilming L.G."/>
            <person name="Aidinis V."/>
            <person name="Allen J.E."/>
            <person name="Ambesi-Impiombato A."/>
            <person name="Apweiler R."/>
            <person name="Aturaliya R.N."/>
            <person name="Bailey T.L."/>
            <person name="Bansal M."/>
            <person name="Baxter L."/>
            <person name="Beisel K.W."/>
            <person name="Bersano T."/>
            <person name="Bono H."/>
            <person name="Chalk A.M."/>
            <person name="Chiu K.P."/>
            <person name="Choudhary V."/>
            <person name="Christoffels A."/>
            <person name="Clutterbuck D.R."/>
            <person name="Crowe M.L."/>
            <person name="Dalla E."/>
            <person name="Dalrymple B.P."/>
            <person name="de Bono B."/>
            <person name="Della Gatta G."/>
            <person name="di Bernardo D."/>
            <person name="Down T."/>
            <person name="Engstrom P."/>
            <person name="Fagiolini M."/>
            <person name="Faulkner G."/>
            <person name="Fletcher C.F."/>
            <person name="Fukushima T."/>
            <person name="Furuno M."/>
            <person name="Futaki S."/>
            <person name="Gariboldi M."/>
            <person name="Georgii-Hemming P."/>
            <person name="Gingeras T.R."/>
            <person name="Gojobori T."/>
            <person name="Green R.E."/>
            <person name="Gustincich S."/>
            <person name="Harbers M."/>
            <person name="Hayashi Y."/>
            <person name="Hensch T.K."/>
            <person name="Hirokawa N."/>
            <person name="Hill D."/>
            <person name="Huminiecki L."/>
            <person name="Iacono M."/>
            <person name="Ikeo K."/>
            <person name="Iwama A."/>
            <person name="Ishikawa T."/>
            <person name="Jakt M."/>
            <person name="Kanapin A."/>
            <person name="Katoh M."/>
            <person name="Kawasawa Y."/>
            <person name="Kelso J."/>
            <person name="Kitamura H."/>
            <person name="Kitano H."/>
            <person name="Kollias G."/>
            <person name="Krishnan S.P."/>
            <person name="Kruger A."/>
            <person name="Kummerfeld S.K."/>
            <person name="Kurochkin I.V."/>
            <person name="Lareau L.F."/>
            <person name="Lazarevic D."/>
            <person name="Lipovich L."/>
            <person name="Liu J."/>
            <person name="Liuni S."/>
            <person name="McWilliam S."/>
            <person name="Madan Babu M."/>
            <person name="Madera M."/>
            <person name="Marchionni L."/>
            <person name="Matsuda H."/>
            <person name="Matsuzawa S."/>
            <person name="Miki H."/>
            <person name="Mignone F."/>
            <person name="Miyake S."/>
            <person name="Morris K."/>
            <person name="Mottagui-Tabar S."/>
            <person name="Mulder N."/>
            <person name="Nakano N."/>
            <person name="Nakauchi H."/>
            <person name="Ng P."/>
            <person name="Nilsson R."/>
            <person name="Nishiguchi S."/>
            <person name="Nishikawa S."/>
            <person name="Nori F."/>
            <person name="Ohara O."/>
            <person name="Okazaki Y."/>
            <person name="Orlando V."/>
            <person name="Pang K.C."/>
            <person name="Pavan W.J."/>
            <person name="Pavesi G."/>
            <person name="Pesole G."/>
            <person name="Petrovsky N."/>
            <person name="Piazza S."/>
            <person name="Reed J."/>
            <person name="Reid J.F."/>
            <person name="Ring B.Z."/>
            <person name="Ringwald M."/>
            <person name="Rost B."/>
            <person name="Ruan Y."/>
            <person name="Salzberg S.L."/>
            <person name="Sandelin A."/>
            <person name="Schneider C."/>
            <person name="Schoenbach C."/>
            <person name="Sekiguchi K."/>
            <person name="Semple C.A."/>
            <person name="Seno S."/>
            <person name="Sessa L."/>
            <person name="Sheng Y."/>
            <person name="Shibata Y."/>
            <person name="Shimada H."/>
            <person name="Shimada K."/>
            <person name="Silva D."/>
            <person name="Sinclair B."/>
            <person name="Sperling S."/>
            <person name="Stupka E."/>
            <person name="Sugiura K."/>
            <person name="Sultana R."/>
            <person name="Takenaka Y."/>
            <person name="Taki K."/>
            <person name="Tammoja K."/>
            <person name="Tan S.L."/>
            <person name="Tang S."/>
            <person name="Taylor M.S."/>
            <person name="Tegner J."/>
            <person name="Teichmann S.A."/>
            <person name="Ueda H.R."/>
            <person name="van Nimwegen E."/>
            <person name="Verardo R."/>
            <person name="Wei C.L."/>
            <person name="Yagi K."/>
            <person name="Yamanishi H."/>
            <person name="Zabarovsky E."/>
            <person name="Zhu S."/>
            <person name="Zimmer A."/>
            <person name="Hide W."/>
            <person name="Bult C."/>
            <person name="Grimmond S.M."/>
            <person name="Teasdale R.D."/>
            <person name="Liu E.T."/>
            <person name="Brusic V."/>
            <person name="Quackenbush J."/>
            <person name="Wahlestedt C."/>
            <person name="Mattick J.S."/>
            <person name="Hume D.A."/>
            <person name="Kai C."/>
            <person name="Sasaki D."/>
            <person name="Tomaru Y."/>
            <person name="Fukuda S."/>
            <person name="Kanamori-Katayama M."/>
            <person name="Suzuki M."/>
            <person name="Aoki J."/>
            <person name="Arakawa T."/>
            <person name="Iida J."/>
            <person name="Imamura K."/>
            <person name="Itoh M."/>
            <person name="Kato T."/>
            <person name="Kawaji H."/>
            <person name="Kawagashira N."/>
            <person name="Kawashima T."/>
            <person name="Kojima M."/>
            <person name="Kondo S."/>
            <person name="Konno H."/>
            <person name="Nakano K."/>
            <person name="Ninomiya N."/>
            <person name="Nishio T."/>
            <person name="Okada M."/>
            <person name="Plessy C."/>
            <person name="Shibata K."/>
            <person name="Shiraki T."/>
            <person name="Suzuki S."/>
            <person name="Tagami M."/>
            <person name="Waki K."/>
            <person name="Watahiki A."/>
            <person name="Okamura-Oho Y."/>
            <person name="Suzuki H."/>
            <person name="Kawai J."/>
            <person name="Hayashizaki Y."/>
        </authorList>
    </citation>
    <scope>NUCLEOTIDE SEQUENCE [LARGE SCALE MRNA]</scope>
    <source>
        <strain>C57BL/6J</strain>
        <strain>DBA/2J</strain>
        <tissue>Blastocyst</tissue>
        <tissue>Embryo</tissue>
        <tissue>Embryonic spinal cord</tissue>
    </source>
</reference>
<reference key="3">
    <citation type="journal article" date="2004" name="Genome Res.">
        <title>The status, quality, and expansion of the NIH full-length cDNA project: the Mammalian Gene Collection (MGC).</title>
        <authorList>
            <consortium name="The MGC Project Team"/>
        </authorList>
    </citation>
    <scope>NUCLEOTIDE SEQUENCE [LARGE SCALE MRNA]</scope>
    <source>
        <strain>C57BL/6J</strain>
        <tissue>Eye</tissue>
    </source>
</reference>
<reference key="4">
    <citation type="journal article" date="2007" name="EMBO J.">
        <title>Reconstitution reveals the functional core of mammalian eIF3.</title>
        <authorList>
            <person name="Masutani M."/>
            <person name="Sonenberg N."/>
            <person name="Yokoyama S."/>
            <person name="Imataka H."/>
        </authorList>
    </citation>
    <scope>CHARACTERIZATION OF THE EIF-3 COMPLEX</scope>
    <scope>IDENTIFICATION IN THE EIF-3 COMPLEX</scope>
    <scope>IDENTIFICATION BY MASS SPECTROMETRY</scope>
</reference>
<reference key="5">
    <citation type="journal article" date="2007" name="Proc. Natl. Acad. Sci. U.S.A.">
        <title>Large-scale phosphorylation analysis of mouse liver.</title>
        <authorList>
            <person name="Villen J."/>
            <person name="Beausoleil S.A."/>
            <person name="Gerber S.A."/>
            <person name="Gygi S.P."/>
        </authorList>
    </citation>
    <scope>PHOSPHORYLATION [LARGE SCALE ANALYSIS] AT SER-528 AND SER-529</scope>
    <scope>IDENTIFICATION BY MASS SPECTROMETRY [LARGE SCALE ANALYSIS]</scope>
    <source>
        <tissue>Liver</tissue>
    </source>
</reference>
<reference key="6">
    <citation type="journal article" date="2010" name="Cell">
        <title>A tissue-specific atlas of mouse protein phosphorylation and expression.</title>
        <authorList>
            <person name="Huttlin E.L."/>
            <person name="Jedrychowski M.P."/>
            <person name="Elias J.E."/>
            <person name="Goswami T."/>
            <person name="Rad R."/>
            <person name="Beausoleil S.A."/>
            <person name="Villen J."/>
            <person name="Haas W."/>
            <person name="Sowa M.E."/>
            <person name="Gygi S.P."/>
        </authorList>
    </citation>
    <scope>PHOSPHORYLATION [LARGE SCALE ANALYSIS] AT SER-528</scope>
    <scope>IDENTIFICATION BY MASS SPECTROMETRY [LARGE SCALE ANALYSIS]</scope>
    <source>
        <tissue>Brain</tissue>
        <tissue>Brown adipose tissue</tissue>
        <tissue>Heart</tissue>
        <tissue>Kidney</tissue>
        <tissue>Liver</tissue>
        <tissue>Lung</tissue>
        <tissue>Pancreas</tissue>
        <tissue>Spleen</tissue>
        <tissue>Testis</tissue>
    </source>
</reference>
<reference key="7">
    <citation type="journal article" date="2013" name="Mol. Cell">
        <title>SIRT5-mediated lysine desuccinylation impacts diverse metabolic pathways.</title>
        <authorList>
            <person name="Park J."/>
            <person name="Chen Y."/>
            <person name="Tishkoff D.X."/>
            <person name="Peng C."/>
            <person name="Tan M."/>
            <person name="Dai L."/>
            <person name="Xie Z."/>
            <person name="Zhang Y."/>
            <person name="Zwaans B.M."/>
            <person name="Skinner M.E."/>
            <person name="Lombard D.B."/>
            <person name="Zhao Y."/>
        </authorList>
    </citation>
    <scope>ACETYLATION [LARGE SCALE ANALYSIS] AT LYS-53</scope>
    <scope>IDENTIFICATION BY MASS SPECTROMETRY [LARGE SCALE ANALYSIS]</scope>
    <source>
        <tissue>Embryonic fibroblast</tissue>
    </source>
</reference>
<comment type="function">
    <text evidence="3">mRNA cap-binding component of the eukaryotic translation initiation factor 3 (eIF-3) complex, a complex required for several steps in the initiation of protein synthesis of a specialized repertoire of mRNAs. The eIF-3 complex associates with the 40S ribosome and facilitates the recruitment of eIF-1, eIF-1A, eIF-2:GTP:methionyl-tRNAi and eIF-5 to form the 43S pre-initiation complex (43S PIC). The eIF-3 complex stimulates mRNA recruitment to the 43S PIC and scanning of the mRNA for AUG recognition. The eIF-3 complex is also required for disassembly and recycling of post-termination ribosomal complexes and subsequently prevents premature joining of the 40S and 60S ribosomal subunits prior to initiation. The eIF-3 complex specifically targets and initiates translation of a subset of mRNAs involved in cell proliferation, including cell cycling, differentiation and apoptosis, and uses different modes of RNA stem-loop binding to exert either translational activation or repression. In the eIF-3 complex, EIF3D specifically recognizes and binds the 7-methylguanosine cap of a subset of mRNAs.</text>
</comment>
<comment type="subunit">
    <text evidence="3 5">Component of the eukaryotic translation initiation factor 3 (eIF-3) complex, which is composed of 13 subunits: EIF3A, EIF3B, EIF3C, EIF3D, EIF3E, EIF3F, EIF3G, EIF3H, EIF3I, EIF3J, EIF3K, EIF3L and EIF3M. The eIF-3 complex appears to include 3 stable modules: module A is composed of EIF3A, EIF3B, EIF3G and EIF3I; module B is composed of EIF3F, EIF3H, and EIF3M; and module C is composed of EIF3C, EIF3D, EIF3E, EIF3K and EIF3L. EIF3C of module C binds EIF3B of module A and EIF3H of module B, thereby linking the three modules. EIF3J is a labile subunit that binds to the eIF-3 complex via EIF3B. The eIF-3 complex may interact with RPS6KB1 under conditions of nutrient depletion. Mitogenic stimulation may lead to binding and activation of a complex composed of MTOR and RPTOR, leading to phosphorylation and release of RPS6KB1 and binding of EIF4B to eIF-3.</text>
</comment>
<comment type="subcellular location">
    <subcellularLocation>
        <location evidence="3">Cytoplasm</location>
    </subcellularLocation>
</comment>
<comment type="domain">
    <text evidence="3">The RNA gate region regulates mRNA cap recognition to prevent promiscuous mRNA-binding before assembly of eif3d into the full eukaryotic translation initiation factor 3 (eIF-3) complex.</text>
</comment>
<comment type="similarity">
    <text evidence="3">Belongs to the eIF-3 subunit D family.</text>
</comment>